<evidence type="ECO:0000250" key="1"/>
<evidence type="ECO:0000250" key="2">
    <source>
        <dbReference type="UniProtKB" id="P04517"/>
    </source>
</evidence>
<evidence type="ECO:0000250" key="3">
    <source>
        <dbReference type="UniProtKB" id="P0CK11"/>
    </source>
</evidence>
<evidence type="ECO:0000255" key="4"/>
<evidence type="ECO:0000255" key="5">
    <source>
        <dbReference type="PROSITE-ProRule" id="PRU01080"/>
    </source>
</evidence>
<evidence type="ECO:0000255" key="6">
    <source>
        <dbReference type="PROSITE-ProRule" id="PRU01219"/>
    </source>
</evidence>
<evidence type="ECO:0000305" key="7"/>
<keyword id="KW-1031">Host cell junction</keyword>
<keyword id="KW-0945">Host-virus interaction</keyword>
<keyword id="KW-0378">Hydrolase</keyword>
<keyword id="KW-1090">Inhibition of host innate immune response by virus</keyword>
<keyword id="KW-0645">Protease</keyword>
<keyword id="KW-0688">Ribosomal frameshifting</keyword>
<keyword id="KW-0720">Serine protease</keyword>
<keyword id="KW-0941">Suppressor of RNA silencing</keyword>
<keyword id="KW-0813">Transport</keyword>
<keyword id="KW-0899">Viral immunoevasion</keyword>
<keyword id="KW-0916">Viral movement protein</keyword>
<reference key="1">
    <citation type="journal article" date="1997" name="Virus Res.">
        <title>Comparison of the complete nucleotide sequences of two isolates of lettuce mosaic virus differing in their biological properties.</title>
        <authorList>
            <person name="Revers F."/>
            <person name="Yang S.J."/>
            <person name="Walter J."/>
            <person name="Souche S."/>
            <person name="Lot H."/>
            <person name="Le Gall O."/>
            <person name="Candresse T."/>
            <person name="Dunez J."/>
        </authorList>
    </citation>
    <scope>NUCLEOTIDE SEQUENCE [MRNA]</scope>
</reference>
<dbReference type="EC" id="3.4.21.-"/>
<dbReference type="EC" id="3.4.22.45"/>
<dbReference type="EMBL" id="X97704">
    <property type="status" value="NOT_ANNOTATED_CDS"/>
    <property type="molecule type" value="mRNA"/>
</dbReference>
<dbReference type="SMR" id="P0CJ97"/>
<dbReference type="Proteomes" id="UP000008377">
    <property type="component" value="Genome"/>
</dbReference>
<dbReference type="GO" id="GO:0044219">
    <property type="term" value="C:host cell plasmodesma"/>
    <property type="evidence" value="ECO:0007669"/>
    <property type="project" value="UniProtKB-SubCell"/>
</dbReference>
<dbReference type="GO" id="GO:0004197">
    <property type="term" value="F:cysteine-type endopeptidase activity"/>
    <property type="evidence" value="ECO:0007669"/>
    <property type="project" value="InterPro"/>
</dbReference>
<dbReference type="GO" id="GO:0008236">
    <property type="term" value="F:serine-type peptidase activity"/>
    <property type="evidence" value="ECO:0007669"/>
    <property type="project" value="UniProtKB-KW"/>
</dbReference>
<dbReference type="GO" id="GO:0006508">
    <property type="term" value="P:proteolysis"/>
    <property type="evidence" value="ECO:0007669"/>
    <property type="project" value="UniProtKB-KW"/>
</dbReference>
<dbReference type="GO" id="GO:0052170">
    <property type="term" value="P:symbiont-mediated suppression of host innate immune response"/>
    <property type="evidence" value="ECO:0007669"/>
    <property type="project" value="UniProtKB-KW"/>
</dbReference>
<dbReference type="GO" id="GO:0046740">
    <property type="term" value="P:transport of virus in host, cell to cell"/>
    <property type="evidence" value="ECO:0007669"/>
    <property type="project" value="UniProtKB-KW"/>
</dbReference>
<dbReference type="GO" id="GO:0075523">
    <property type="term" value="P:viral translational frameshifting"/>
    <property type="evidence" value="ECO:0007669"/>
    <property type="project" value="UniProtKB-KW"/>
</dbReference>
<dbReference type="Gene3D" id="3.90.70.150">
    <property type="entry name" value="Helper component proteinase"/>
    <property type="match status" value="1"/>
</dbReference>
<dbReference type="InterPro" id="IPR001456">
    <property type="entry name" value="HC-pro"/>
</dbReference>
<dbReference type="InterPro" id="IPR031159">
    <property type="entry name" value="HC_PRO_CPD_dom"/>
</dbReference>
<dbReference type="InterPro" id="IPR042308">
    <property type="entry name" value="HC_PRO_CPD_sf"/>
</dbReference>
<dbReference type="InterPro" id="IPR002540">
    <property type="entry name" value="Pept_S30_P1_potyvir"/>
</dbReference>
<dbReference type="InterPro" id="IPR039560">
    <property type="entry name" value="Potyvirid-P3"/>
</dbReference>
<dbReference type="Pfam" id="PF00851">
    <property type="entry name" value="Peptidase_C6"/>
    <property type="match status" value="1"/>
</dbReference>
<dbReference type="Pfam" id="PF01577">
    <property type="entry name" value="Peptidase_S30"/>
    <property type="match status" value="1"/>
</dbReference>
<dbReference type="Pfam" id="PF13608">
    <property type="entry name" value="Potyvirid-P3"/>
    <property type="match status" value="1"/>
</dbReference>
<dbReference type="PROSITE" id="PS51744">
    <property type="entry name" value="HC_PRO_CPD"/>
    <property type="match status" value="1"/>
</dbReference>
<dbReference type="PROSITE" id="PS51871">
    <property type="entry name" value="PV_P1_PRO"/>
    <property type="match status" value="1"/>
</dbReference>
<protein>
    <recommendedName>
        <fullName>P3N-PIPO polyprotein</fullName>
    </recommendedName>
    <component>
        <recommendedName>
            <fullName>P1 protease</fullName>
            <ecNumber>3.4.21.-</ecNumber>
        </recommendedName>
        <alternativeName>
            <fullName>N-terminal protein</fullName>
        </alternativeName>
        <alternativeName>
            <fullName>P1 proteinase</fullName>
        </alternativeName>
    </component>
    <component>
        <recommendedName>
            <fullName>Helper component proteinase</fullName>
            <shortName>HC-pro</shortName>
            <ecNumber>3.4.22.45</ecNumber>
        </recommendedName>
    </component>
    <component>
        <recommendedName>
            <fullName>Movement protein P3N-PIPO</fullName>
        </recommendedName>
        <alternativeName>
            <fullName>Pretty interesting potyviridae ORF</fullName>
            <shortName>PIPO</shortName>
        </alternativeName>
    </component>
</protein>
<name>MVP_LMV0</name>
<organism>
    <name type="scientific">Lettuce mosaic virus (strain 0 / isolate French)</name>
    <name type="common">LMV</name>
    <dbReference type="NCBI Taxonomy" id="117132"/>
    <lineage>
        <taxon>Viruses</taxon>
        <taxon>Riboviria</taxon>
        <taxon>Orthornavirae</taxon>
        <taxon>Pisuviricota</taxon>
        <taxon>Stelpaviricetes</taxon>
        <taxon>Patatavirales</taxon>
        <taxon>Potyviridae</taxon>
        <taxon>Potyvirus</taxon>
        <taxon>Potyvirus lactucae</taxon>
        <taxon>Lettuce mosaic virus</taxon>
    </lineage>
</organism>
<proteinExistence type="evidence at transcript level"/>
<comment type="function">
    <molecule>Helper component proteinase</molecule>
    <text evidence="2">Required for aphid transmission and also has proteolytic activity. Only cleaves a Gly-Gly dipeptide at its own C-terminus. Interacts with virions and aphid stylets. Acts as a suppressor of RNA-mediated gene silencing, also known as post-transcriptional gene silencing (PTGS), a mechanism of plant viral defense that limits the accumulation of viral RNAs. May have RNA-binding activity.</text>
</comment>
<comment type="function">
    <molecule>Movement protein P3N-PIPO</molecule>
    <text evidence="3">Allows efficient cell to cell propagation, by bypassing the host cell wall barrier. Transports viral genome to neighboring plant cells directly through plasmosdesmata, without any budding.</text>
</comment>
<comment type="catalytic activity">
    <molecule>Helper component proteinase</molecule>
    <reaction>
        <text>Hydrolyzes a Gly-|-Gly bond at its own C-terminus, commonly in the sequence -Tyr-Xaa-Val-Gly-|-Gly, in the processing of the potyviral polyprotein.</text>
        <dbReference type="EC" id="3.4.22.45"/>
    </reaction>
</comment>
<comment type="subunit">
    <molecule>Movement protein P3N-PIPO</molecule>
    <text evidence="3">Interacts (via PIPO domain) with host PCaP1 protein; this interaction may help to anchor the movement complex to the plasma membrane from which the complex could move to the plasmodesmata.</text>
</comment>
<comment type="subcellular location">
    <molecule>Movement protein P3N-PIPO</molecule>
    <subcellularLocation>
        <location evidence="3">Host cell junction</location>
        <location evidence="3">Host plasmodesma</location>
    </subcellularLocation>
</comment>
<comment type="alternative products">
    <event type="ribosomal frameshifting"/>
    <isoform>
        <id>P0CJ97-1</id>
        <name>P3N-PIPO polyprotein</name>
        <sequence type="displayed"/>
    </isoform>
    <isoform>
        <id>P31999-1</id>
        <name>Genome polyprotein</name>
        <sequence type="external"/>
    </isoform>
</comment>
<comment type="domain">
    <text evidence="1">The N-terminus of helper component proteinase is involved in interaction with stylets. The central part is involved in interaction with virions and the C-terminus is involved in cell-to cell movement of the virus (By similarity).</text>
</comment>
<comment type="PTM">
    <text evidence="1">Potyviral RNA is expressed as two polyproteins which undergo post-translational proteolytic processing. Genome polyprotein is processed by NIa-pro, P1 and HC-pro proteinases resulting in the production of at least ten individual proteins. P3N-PIPO is cleaved by P1 and HC-pro proteinases resulting in the production of three individual proteins. The P1 proteinase and the HC-pro cleave only their respective C-termini autocatalytically (By similarity).</text>
</comment>
<comment type="miscellaneous">
    <molecule>Isoform P3N-PIPO polyprotein</molecule>
    <text>Produced by -1 ribosomal frameshifting in P3 ORF.</text>
</comment>
<comment type="similarity">
    <text evidence="7">Belongs to the potyviridae P3N-PIPO polyprotein family.</text>
</comment>
<accession>P0CJ97</accession>
<feature type="chain" id="PRO_0000420057" description="P3N-PIPO polyprotein">
    <location>
        <begin position="1"/>
        <end position="1152"/>
    </location>
</feature>
<feature type="chain" id="PRO_0000420058" description="P1 protease" evidence="4">
    <location>
        <begin position="1"/>
        <end position="437"/>
    </location>
</feature>
<feature type="chain" id="PRO_0000420059" description="Helper component proteinase" evidence="4">
    <location>
        <begin position="438"/>
        <end position="895"/>
    </location>
</feature>
<feature type="chain" id="PRO_0000408541" description="Movement protein P3N-PIPO">
    <location>
        <begin position="896"/>
        <end position="1152"/>
    </location>
</feature>
<feature type="domain" description="Peptidase S30" evidence="6">
    <location>
        <begin position="292"/>
        <end position="437"/>
    </location>
</feature>
<feature type="domain" description="Peptidase C6" evidence="5">
    <location>
        <begin position="773"/>
        <end position="895"/>
    </location>
</feature>
<feature type="short sequence motif" description="Involved in interaction with stylet and aphid transmission" evidence="1">
    <location>
        <begin position="489"/>
        <end position="492"/>
    </location>
</feature>
<feature type="short sequence motif" description="Involved in virions binding and aphid transmission" evidence="1">
    <location>
        <begin position="747"/>
        <end position="749"/>
    </location>
</feature>
<feature type="active site" description="For P1 proteinase activity" evidence="6">
    <location>
        <position position="345"/>
    </location>
</feature>
<feature type="active site" description="For P1 proteinase activity" evidence="6">
    <location>
        <position position="354"/>
    </location>
</feature>
<feature type="active site" description="For P1 proteinase activity" evidence="6">
    <location>
        <position position="388"/>
    </location>
</feature>
<feature type="active site" description="For helper component proteinase activity" evidence="5">
    <location>
        <position position="781"/>
    </location>
</feature>
<feature type="active site" description="For helper component proteinase activity" evidence="5">
    <location>
        <position position="854"/>
    </location>
</feature>
<feature type="site" description="Cleavage; by P1 proteinase" evidence="6">
    <location>
        <begin position="437"/>
        <end position="438"/>
    </location>
</feature>
<feature type="site" description="Cleavage; by autolysis" evidence="5">
    <location>
        <begin position="895"/>
        <end position="896"/>
    </location>
</feature>
<feature type="unsure residue">
    <location>
        <begin position="1076"/>
        <end position="1082"/>
    </location>
</feature>
<organismHost>
    <name type="scientific">Carthamus tinctorius</name>
    <name type="common">Safflower</name>
    <dbReference type="NCBI Taxonomy" id="4222"/>
</organismHost>
<organismHost>
    <name type="scientific">Cicer arietinum</name>
    <name type="common">Chickpea</name>
    <name type="synonym">Garbanzo</name>
    <dbReference type="NCBI Taxonomy" id="3827"/>
</organismHost>
<organismHost>
    <name type="scientific">Cichorium endivia</name>
    <name type="common">Endive</name>
    <dbReference type="NCBI Taxonomy" id="114280"/>
</organismHost>
<organismHost>
    <name type="scientific">Cichorium intybus</name>
    <name type="common">Chicory</name>
    <dbReference type="NCBI Taxonomy" id="13427"/>
</organismHost>
<organismHost>
    <name type="scientific">Eustoma exaltatum subsp. russellianum</name>
    <name type="common">Bluebells</name>
    <name type="synonym">Eustoma grandiflorum</name>
    <dbReference type="NCBI Taxonomy" id="52518"/>
</organismHost>
<organismHost>
    <name type="scientific">Lactuca</name>
    <dbReference type="NCBI Taxonomy" id="4235"/>
</organismHost>
<organismHost>
    <name type="scientific">Pisum sativum</name>
    <name type="common">Garden pea</name>
    <name type="synonym">Lathyrus oleraceus</name>
    <dbReference type="NCBI Taxonomy" id="3888"/>
</organismHost>
<organismHost>
    <name type="scientific">Spinacia oleracea</name>
    <name type="common">Spinach</name>
    <dbReference type="NCBI Taxonomy" id="3562"/>
</organismHost>
<sequence>MATLDNCTQVHHMFAYNREHGTNYTRNHFRRYLAAQRIGFYYDWDDDVYECPTCEAIYHSLDDIKNWHECDPPAFDLNDFITDARLKSAPVPDLGPVIIEIPKAEEKQELNFFAATPAPEVSQWKCRGLQFGSFTELETSEPVASAPEPKCEEPARTIAKPEESVEQETRGDGKRLLQAQMEVDKAEQDLAFACLNASLKPRLEGRTTATIARRRDGCLVYKTKPSWSQRRRAKKTLKVDTLACENPYIPAIVDKISIAGGSSASVMHEQQKPKTLHTTPSRKVATHYKRTVMNQQTLMAFINQVGTILLNAEKEFEVVGCRKQKVTGKGTRHNGVRLVKLKTAHEEGHRRRVDIRIPNGLRPIVMRISARGGWHRTWTDSELSPGSSGYVLNSSKIIGKFGLRRHSIFVVRGRVDGEVIDSQSKVTHSITHRMVQYSDVARNFWNGYSTCFMHNTPKDILHTCTSDFDVKECGTVAALLTQTLFQFGKITCEKCAIEYKNLTRDELATRVNKEIDGTIISIQTQHPRFVHVLNFLRLIKQVLNAKNGNFGAFQETERIIGDRMDAPFSHVNKLNAIVIKGNQATSDEMAQASNHVLEIARYLKNRTENIQKGSLKSFRNKISGKAHLNPSLMCDNQLDKNGGFEWGQRSYHAKRFFDGYFETIDPSDGYSKYTIRRNPNGHRKLAIGNLIVSTNFESHRRSMIGESIEDPGLTNQCVSKEGDTFIYPCCCVTDEYGKPTLSEIKMPTKHHLVLGNAGDPKYVDLPKEAEGKMFVTKDGYCYINIFLAMLVDVPEDQAKDFTKMAREIAVKQLGEWPSMMDVATACNILATFHPDTRRSELPRILVDHATKTFHVIDSYGSITTGFHILKANTVTQLVKFAHESLESEMQHYRVGGEPDKAPRKPAGSVPTLGISDLRDLGVELENEEHSIRPNLQRLIKAIYRPRMMRSLLTEEPYLLILSIVSPGVLMALYNSGSLERTMHEFLQTDQRLSATAQILKHLAKKVSLAKTLTIQNAILEGGAGSLNEILDAPAGRSLSYRLAKQTVEVMMARSDMDKELVDVGFSVLRDQKNELIEKKLSHGFGGFVARTTIVWKIISNASLAAMAGYFYSRSNPNRRRRFERQIQYLGWICFQKRDLAPKGNLLRRSKES</sequence>